<protein>
    <recommendedName>
        <fullName>Histone transcription regulator 3 homolog</fullName>
    </recommendedName>
</protein>
<keyword id="KW-0159">Chromosome partition</keyword>
<keyword id="KW-0539">Nucleus</keyword>
<keyword id="KW-1185">Reference proteome</keyword>
<keyword id="KW-0804">Transcription</keyword>
<keyword id="KW-0805">Transcription regulation</keyword>
<feature type="chain" id="PRO_0000256200" description="Histone transcription regulator 3 homolog">
    <location>
        <begin position="1"/>
        <end position="2061"/>
    </location>
</feature>
<feature type="region of interest" description="Disordered" evidence="2">
    <location>
        <begin position="339"/>
        <end position="370"/>
    </location>
</feature>
<feature type="region of interest" description="Disordered" evidence="2">
    <location>
        <begin position="403"/>
        <end position="460"/>
    </location>
</feature>
<feature type="region of interest" description="Disordered" evidence="2">
    <location>
        <begin position="1765"/>
        <end position="2061"/>
    </location>
</feature>
<feature type="compositionally biased region" description="Polar residues" evidence="2">
    <location>
        <begin position="403"/>
        <end position="414"/>
    </location>
</feature>
<feature type="compositionally biased region" description="Low complexity" evidence="2">
    <location>
        <begin position="1765"/>
        <end position="1784"/>
    </location>
</feature>
<feature type="compositionally biased region" description="Basic and acidic residues" evidence="2">
    <location>
        <begin position="1792"/>
        <end position="1801"/>
    </location>
</feature>
<feature type="compositionally biased region" description="Low complexity" evidence="2">
    <location>
        <begin position="1813"/>
        <end position="1832"/>
    </location>
</feature>
<feature type="compositionally biased region" description="Acidic residues" evidence="2">
    <location>
        <begin position="1868"/>
        <end position="1879"/>
    </location>
</feature>
<feature type="compositionally biased region" description="Acidic residues" evidence="2">
    <location>
        <begin position="1922"/>
        <end position="1979"/>
    </location>
</feature>
<feature type="compositionally biased region" description="Acidic residues" evidence="2">
    <location>
        <begin position="1988"/>
        <end position="2012"/>
    </location>
</feature>
<feature type="compositionally biased region" description="Acidic residues" evidence="2">
    <location>
        <begin position="2047"/>
        <end position="2061"/>
    </location>
</feature>
<reference key="1">
    <citation type="journal article" date="2005" name="Nature">
        <title>Sequencing of Aspergillus nidulans and comparative analysis with A. fumigatus and A. oryzae.</title>
        <authorList>
            <person name="Galagan J.E."/>
            <person name="Calvo S.E."/>
            <person name="Cuomo C."/>
            <person name="Ma L.-J."/>
            <person name="Wortman J.R."/>
            <person name="Batzoglou S."/>
            <person name="Lee S.-I."/>
            <person name="Bastuerkmen M."/>
            <person name="Spevak C.C."/>
            <person name="Clutterbuck J."/>
            <person name="Kapitonov V."/>
            <person name="Jurka J."/>
            <person name="Scazzocchio C."/>
            <person name="Farman M.L."/>
            <person name="Butler J."/>
            <person name="Purcell S."/>
            <person name="Harris S."/>
            <person name="Braus G.H."/>
            <person name="Draht O."/>
            <person name="Busch S."/>
            <person name="D'Enfert C."/>
            <person name="Bouchier C."/>
            <person name="Goldman G.H."/>
            <person name="Bell-Pedersen D."/>
            <person name="Griffiths-Jones S."/>
            <person name="Doonan J.H."/>
            <person name="Yu J."/>
            <person name="Vienken K."/>
            <person name="Pain A."/>
            <person name="Freitag M."/>
            <person name="Selker E.U."/>
            <person name="Archer D.B."/>
            <person name="Penalva M.A."/>
            <person name="Oakley B.R."/>
            <person name="Momany M."/>
            <person name="Tanaka T."/>
            <person name="Kumagai T."/>
            <person name="Asai K."/>
            <person name="Machida M."/>
            <person name="Nierman W.C."/>
            <person name="Denning D.W."/>
            <person name="Caddick M.X."/>
            <person name="Hynes M."/>
            <person name="Paoletti M."/>
            <person name="Fischer R."/>
            <person name="Miller B.L."/>
            <person name="Dyer P.S."/>
            <person name="Sachs M.S."/>
            <person name="Osmani S.A."/>
            <person name="Birren B.W."/>
        </authorList>
    </citation>
    <scope>NUCLEOTIDE SEQUENCE [LARGE SCALE GENOMIC DNA]</scope>
    <source>
        <strain>FGSC A4 / ATCC 38163 / CBS 112.46 / NRRL 194 / M139</strain>
    </source>
</reference>
<reference key="2">
    <citation type="journal article" date="2009" name="Fungal Genet. Biol.">
        <title>The 2008 update of the Aspergillus nidulans genome annotation: a community effort.</title>
        <authorList>
            <person name="Wortman J.R."/>
            <person name="Gilsenan J.M."/>
            <person name="Joardar V."/>
            <person name="Deegan J."/>
            <person name="Clutterbuck J."/>
            <person name="Andersen M.R."/>
            <person name="Archer D."/>
            <person name="Bencina M."/>
            <person name="Braus G."/>
            <person name="Coutinho P."/>
            <person name="von Dohren H."/>
            <person name="Doonan J."/>
            <person name="Driessen A.J."/>
            <person name="Durek P."/>
            <person name="Espeso E."/>
            <person name="Fekete E."/>
            <person name="Flipphi M."/>
            <person name="Estrada C.G."/>
            <person name="Geysens S."/>
            <person name="Goldman G."/>
            <person name="de Groot P.W."/>
            <person name="Hansen K."/>
            <person name="Harris S.D."/>
            <person name="Heinekamp T."/>
            <person name="Helmstaedt K."/>
            <person name="Henrissat B."/>
            <person name="Hofmann G."/>
            <person name="Homan T."/>
            <person name="Horio T."/>
            <person name="Horiuchi H."/>
            <person name="James S."/>
            <person name="Jones M."/>
            <person name="Karaffa L."/>
            <person name="Karanyi Z."/>
            <person name="Kato M."/>
            <person name="Keller N."/>
            <person name="Kelly D.E."/>
            <person name="Kiel J.A."/>
            <person name="Kim J.M."/>
            <person name="van der Klei I.J."/>
            <person name="Klis F.M."/>
            <person name="Kovalchuk A."/>
            <person name="Krasevec N."/>
            <person name="Kubicek C.P."/>
            <person name="Liu B."/>
            <person name="Maccabe A."/>
            <person name="Meyer V."/>
            <person name="Mirabito P."/>
            <person name="Miskei M."/>
            <person name="Mos M."/>
            <person name="Mullins J."/>
            <person name="Nelson D.R."/>
            <person name="Nielsen J."/>
            <person name="Oakley B.R."/>
            <person name="Osmani S.A."/>
            <person name="Pakula T."/>
            <person name="Paszewski A."/>
            <person name="Paulsen I."/>
            <person name="Pilsyk S."/>
            <person name="Pocsi I."/>
            <person name="Punt P.J."/>
            <person name="Ram A.F."/>
            <person name="Ren Q."/>
            <person name="Robellet X."/>
            <person name="Robson G."/>
            <person name="Seiboth B."/>
            <person name="van Solingen P."/>
            <person name="Specht T."/>
            <person name="Sun J."/>
            <person name="Taheri-Talesh N."/>
            <person name="Takeshita N."/>
            <person name="Ussery D."/>
            <person name="vanKuyk P.A."/>
            <person name="Visser H."/>
            <person name="van de Vondervoort P.J."/>
            <person name="de Vries R.P."/>
            <person name="Walton J."/>
            <person name="Xiang X."/>
            <person name="Xiong Y."/>
            <person name="Zeng A.P."/>
            <person name="Brandt B.W."/>
            <person name="Cornell M.J."/>
            <person name="van den Hondel C.A."/>
            <person name="Visser J."/>
            <person name="Oliver S.G."/>
            <person name="Turner G."/>
        </authorList>
    </citation>
    <scope>GENOME REANNOTATION</scope>
    <source>
        <strain>FGSC A4 / ATCC 38163 / CBS 112.46 / NRRL 194 / M139</strain>
    </source>
</reference>
<proteinExistence type="inferred from homology"/>
<organism>
    <name type="scientific">Emericella nidulans (strain FGSC A4 / ATCC 38163 / CBS 112.46 / NRRL 194 / M139)</name>
    <name type="common">Aspergillus nidulans</name>
    <dbReference type="NCBI Taxonomy" id="227321"/>
    <lineage>
        <taxon>Eukaryota</taxon>
        <taxon>Fungi</taxon>
        <taxon>Dikarya</taxon>
        <taxon>Ascomycota</taxon>
        <taxon>Pezizomycotina</taxon>
        <taxon>Eurotiomycetes</taxon>
        <taxon>Eurotiomycetidae</taxon>
        <taxon>Eurotiales</taxon>
        <taxon>Aspergillaceae</taxon>
        <taxon>Aspergillus</taxon>
        <taxon>Aspergillus subgen. Nidulantes</taxon>
    </lineage>
</organism>
<dbReference type="EMBL" id="AACD01000051">
    <property type="protein sequence ID" value="EAA63694.1"/>
    <property type="molecule type" value="Genomic_DNA"/>
</dbReference>
<dbReference type="EMBL" id="BN001306">
    <property type="protein sequence ID" value="CBF83365.1"/>
    <property type="molecule type" value="Genomic_DNA"/>
</dbReference>
<dbReference type="RefSeq" id="XP_660727.1">
    <property type="nucleotide sequence ID" value="XM_655635.1"/>
</dbReference>
<dbReference type="SMR" id="Q5B8K7"/>
<dbReference type="FunCoup" id="Q5B8K7">
    <property type="interactions" value="128"/>
</dbReference>
<dbReference type="STRING" id="227321.Q5B8K7"/>
<dbReference type="EnsemblFungi" id="CBF83365">
    <property type="protein sequence ID" value="CBF83365"/>
    <property type="gene ID" value="ANIA_03123"/>
</dbReference>
<dbReference type="KEGG" id="ani:ANIA_03123"/>
<dbReference type="VEuPathDB" id="FungiDB:AN3123"/>
<dbReference type="eggNOG" id="ENOG502QQX4">
    <property type="taxonomic scope" value="Eukaryota"/>
</dbReference>
<dbReference type="HOGENOM" id="CLU_001419_0_0_1"/>
<dbReference type="InParanoid" id="Q5B8K7"/>
<dbReference type="OMA" id="WETWYRL"/>
<dbReference type="OrthoDB" id="77564at2759"/>
<dbReference type="Proteomes" id="UP000000560">
    <property type="component" value="Chromosome VI"/>
</dbReference>
<dbReference type="GO" id="GO:0000417">
    <property type="term" value="C:HIR complex"/>
    <property type="evidence" value="ECO:0000318"/>
    <property type="project" value="GO_Central"/>
</dbReference>
<dbReference type="GO" id="GO:0005634">
    <property type="term" value="C:nucleus"/>
    <property type="evidence" value="ECO:0000318"/>
    <property type="project" value="GO_Central"/>
</dbReference>
<dbReference type="GO" id="GO:0006325">
    <property type="term" value="P:chromatin organization"/>
    <property type="evidence" value="ECO:0007669"/>
    <property type="project" value="InterPro"/>
</dbReference>
<dbReference type="GO" id="GO:0007059">
    <property type="term" value="P:chromosome segregation"/>
    <property type="evidence" value="ECO:0007669"/>
    <property type="project" value="UniProtKB-KW"/>
</dbReference>
<dbReference type="InterPro" id="IPR033053">
    <property type="entry name" value="Hir3/CABIN1"/>
</dbReference>
<dbReference type="PANTHER" id="PTHR15502">
    <property type="entry name" value="CALCINEURIN-BINDING PROTEIN CABIN 1-RELATED"/>
    <property type="match status" value="1"/>
</dbReference>
<dbReference type="PANTHER" id="PTHR15502:SF7">
    <property type="entry name" value="CALCINEURIN-BINDING PROTEIN CABIN-1"/>
    <property type="match status" value="1"/>
</dbReference>
<comment type="function">
    <text evidence="1">Has a role in a nucleosome assembly pathway that is required for the integrity of heterochromatin and proper chromosome segregation.</text>
</comment>
<comment type="subcellular location">
    <subcellularLocation>
        <location evidence="1">Nucleus</location>
    </subcellularLocation>
</comment>
<comment type="similarity">
    <text evidence="3">Belongs to the HIR3 family.</text>
</comment>
<sequence length="2061" mass="232556">MSTWVALNIEPDEAIEEEVDDTKEIQIEEALKLYQNALKLHSQGPRYYKQAGEAYEALLDSEIFKYPESLSDHKRAALQDAEPQVGGTTNDAVVGEAALDFNINDTTSSTLQQTIYLSYKNHGQYVLDALRASLQELSKLSEDSSHLSSKIAESSTTALAQFAEALERDDTDLNLWRQSARLCSALQSYRLTRFCLESVLADDDNRLEVRSEQLGLEETFAEEGLRKTLHSVQDRLSVSLVPIKKPKKALLKFFKQQSDPYPYLPSLPDNLQDLDSSRNPLAFRASTHEIKIDSLTWAAIGQAILTFLDDKNGTPSLAPGTSITISLPADSPELKTASITAQRRPSKAQVDENNNQDVQMDDAQSVGARSVTGAQGRELAMEHGDDQSSVDQRAEKQLIESLEVQSIQHQQSTDPQEDIKAEEDDLKYPENTSRKRSSGSAITEDQAERLRVKSRRTRLRDSLAEASTHTDDVVFDQAKYYEDLLEPYIQTDEGVFGTVGALLSKLGVEDLGTFEELRRSVASAGERKDSPVTPVNIDNAEVLLQDLRNVLTQWDERLYQVMQQSDSLAGLQDIKSMGRSGLAVFLEHSKKTTHKLKLKQTFSGEDELFDFIRAVNGSRLHLHDVVFEWLGCLLRPDYKNFLTHDNQFNDWSLVESSYVAYQWPTTLKDVVLQLLSLEDEYIHGKLEEGMQTLEHHILEAQSGTPFRYTAKHFADLEMIQAIYELHLDLYAPMNAPNNETDHRTRTLQQDRLARWSMLARSALTHFIDCCPERVNRERITIRHIWASTFHSNMGVDAQREHILLCLEDLKRLFSCLNEPVLSLANSSIMSELSCEAIDQEISKLNSMDFFTRIFNPDSEDPVGLIETIEPIVEPSAVQFEEGSEDRQSLQRREMGSFLDRGDATLRLFLWRRLQDAYRKIDYPPKVVSCHLRSIETIIKELRSQAYVEEPGEHRQATLVRWLKSLDGMLSKTVTTVLQESDKAYDCFDTEHVKSSMSAVAFLIRLLHSFVLYDDSVRVGQSPGIDLRAALAKSLENFKEKMRDMLVRCWVLLYTLLKEAIAQNQEMFDEPLEDRVYYLRAVHNSLGLRQMCKRSRNQFLKLVKSELLALDVEQDIEADICQILFDIHGVKLSLSDHLLSDHGCVPEKLDRSTAIMMIDFVMKQAKKINIKDLSKSELKNTIEKMQQSIGTTKAVPPVSYNRRILNAYLKTPINPSELVRAIQGVTDLPFIPVPSQTAVIANSGWYFLLGYAALTKFRSQKRLNPVPTTDLDEAISWFRQDLEHNTSRWESWYRLAQVWDSKVEEDITWSADKINNNRTELVTWQRNAIHCYAMAVATAAKTAESGPETGALLADLYTDFGIRLYSSSREPLSMAAFSVADFTRHFSNEESQQMYEGRPFKEMKVYNVWRLAAFLLRQALVDKPKNWMTHYMLSKCLWKMFSCDDSVRGSSKRISLDSVLDSLLDTIDALPQRKDSRSEPIFEPHYKLVSIIHKLVIKEVLTPAEASKTLVATPWARKVPACEDRNSWKKYILDVLKNLKNADKANWHHRMAVRSARIIYDDNKGAIAAAEAKSELTQQIFTKTMTIQVWKPEYERPGRHFVYTTRYAYFFVTLLDQLDDRANLEQLLRRVRKKQGDFINHTKLWEDMCLTYARVIRRAAGISEGHEESVFKPIGWEEFSSNTARLEELPQLAPESPSLLELLRDAIELKKLNNNLMKVALLEDLIADVYSRIYEVNLPILLEQVDEENKEKMKVDHILMTADGAATADTSTPPTSAPASEAPAPRGRTKGIARRDIQKRAEAIVSRKVPPRAPATKAPTTTETESATNATNSVGPKPVVEISVRQPPAAVVDSAGQQSDIPNSLHDSADDESELSEIDEDKLSKLAADPKMLFPNFGHRSRGSLEPDSELSAQASPSGDADVANENEEVGELEGDDREGEDEGEAGPDADLEEESMNDGDGDGDGDEAGEGEGENENENGNDGNVSGNDEDDDVDMEAGEEEEEAPGQDGEIEGNTTMEGTDAADGEDPEHVHRQEQEQEQQVGGEQEGETVYDTELATEL</sequence>
<evidence type="ECO:0000250" key="1"/>
<evidence type="ECO:0000256" key="2">
    <source>
        <dbReference type="SAM" id="MobiDB-lite"/>
    </source>
</evidence>
<evidence type="ECO:0000305" key="3"/>
<gene>
    <name type="primary">hir3</name>
    <name type="ORF">AN3123</name>
</gene>
<name>HIR3_EMENI</name>
<accession>Q5B8K7</accession>
<accession>C8VIJ7</accession>